<evidence type="ECO:0000250" key="1"/>
<evidence type="ECO:0000255" key="2"/>
<evidence type="ECO:0000305" key="3"/>
<dbReference type="EMBL" id="AA818561">
    <property type="status" value="NOT_ANNOTATED_CDS"/>
    <property type="molecule type" value="mRNA"/>
</dbReference>
<dbReference type="RefSeq" id="NP_001420355.1">
    <property type="nucleotide sequence ID" value="NM_001433426.1"/>
</dbReference>
<dbReference type="SMR" id="P83121"/>
<dbReference type="GeneID" id="134480016"/>
<dbReference type="UCSC" id="RGD:1592962">
    <property type="organism name" value="rat"/>
</dbReference>
<dbReference type="AGR" id="RGD:402364851"/>
<dbReference type="RGD" id="1592962">
    <property type="gene designation" value="LOC680367"/>
</dbReference>
<dbReference type="InParanoid" id="P83121"/>
<dbReference type="PhylomeDB" id="P83121"/>
<dbReference type="TreeFam" id="TF337781"/>
<dbReference type="PRO" id="PR:P83121"/>
<dbReference type="Proteomes" id="UP000002494">
    <property type="component" value="Unplaced"/>
</dbReference>
<dbReference type="GO" id="GO:0005576">
    <property type="term" value="C:extracellular region"/>
    <property type="evidence" value="ECO:0007669"/>
    <property type="project" value="UniProtKB-SubCell"/>
</dbReference>
<dbReference type="GO" id="GO:0005886">
    <property type="term" value="C:plasma membrane"/>
    <property type="evidence" value="ECO:0000318"/>
    <property type="project" value="GO_Central"/>
</dbReference>
<dbReference type="GO" id="GO:0001848">
    <property type="term" value="F:complement binding"/>
    <property type="evidence" value="ECO:0000318"/>
    <property type="project" value="GO_Central"/>
</dbReference>
<dbReference type="GO" id="GO:0001971">
    <property type="term" value="P:negative regulation of activation of membrane attack complex"/>
    <property type="evidence" value="ECO:0000318"/>
    <property type="project" value="GO_Central"/>
</dbReference>
<dbReference type="CDD" id="cd23627">
    <property type="entry name" value="TFP_LU_ECD_UP"/>
    <property type="match status" value="1"/>
</dbReference>
<dbReference type="InterPro" id="IPR016054">
    <property type="entry name" value="LY6_UPA_recep-like"/>
</dbReference>
<dbReference type="Pfam" id="PF00021">
    <property type="entry name" value="UPAR_LY6"/>
    <property type="match status" value="1"/>
</dbReference>
<keyword id="KW-1015">Disulfide bond</keyword>
<keyword id="KW-1185">Reference proteome</keyword>
<keyword id="KW-0964">Secreted</keyword>
<keyword id="KW-0732">Signal</keyword>
<feature type="signal peptide" evidence="1">
    <location>
        <begin position="1"/>
        <end position="21"/>
    </location>
</feature>
<feature type="chain" id="PRO_0000036171" description="Urinary protein 3">
    <location>
        <begin position="22"/>
        <end position="101"/>
    </location>
</feature>
<feature type="domain" description="UPAR/Ly6" evidence="3">
    <location>
        <begin position="22"/>
        <end position="99"/>
    </location>
</feature>
<feature type="disulfide bond" evidence="2">
    <location>
        <begin position="24"/>
        <end position="51"/>
    </location>
</feature>
<feature type="disulfide bond" evidence="2">
    <location>
        <begin position="27"/>
        <end position="36"/>
    </location>
</feature>
<feature type="disulfide bond" evidence="2">
    <location>
        <begin position="43"/>
        <end position="70"/>
    </location>
</feature>
<feature type="disulfide bond" evidence="2">
    <location>
        <begin position="73"/>
        <end position="89"/>
    </location>
</feature>
<feature type="disulfide bond" evidence="2">
    <location>
        <begin position="90"/>
        <end position="96"/>
    </location>
</feature>
<accession>P83121</accession>
<proteinExistence type="inferred from homology"/>
<protein>
    <recommendedName>
        <fullName>Urinary protein 3</fullName>
        <shortName>UP-3</shortName>
        <shortName>rUP-3</shortName>
    </recommendedName>
</protein>
<organism>
    <name type="scientific">Rattus norvegicus</name>
    <name type="common">Rat</name>
    <dbReference type="NCBI Taxonomy" id="10116"/>
    <lineage>
        <taxon>Eukaryota</taxon>
        <taxon>Metazoa</taxon>
        <taxon>Chordata</taxon>
        <taxon>Craniata</taxon>
        <taxon>Vertebrata</taxon>
        <taxon>Euteleostomi</taxon>
        <taxon>Mammalia</taxon>
        <taxon>Eutheria</taxon>
        <taxon>Euarchontoglires</taxon>
        <taxon>Glires</taxon>
        <taxon>Rodentia</taxon>
        <taxon>Myomorpha</taxon>
        <taxon>Muroidea</taxon>
        <taxon>Muridae</taxon>
        <taxon>Murinae</taxon>
        <taxon>Rattus</taxon>
    </lineage>
</organism>
<name>UP3_RAT</name>
<reference key="1">
    <citation type="submission" date="1998-02" db="EMBL/GenBank/DDBJ databases">
        <authorList>
            <person name="Soares M.B."/>
        </authorList>
    </citation>
    <scope>NUCLEOTIDE SEQUENCE [MRNA]</scope>
    <source>
        <strain>Sprague-Dawley</strain>
    </source>
</reference>
<reference key="2">
    <citation type="journal article" date="2001" name="Electrophoresis">
        <title>Proteins of rat serum, urine, and cerebrospinal fluid: VI. Further protein identifications and interstrain comparison.</title>
        <authorList>
            <person name="Wait R."/>
            <person name="Gianazza E."/>
            <person name="Eberini I."/>
            <person name="Sironi L."/>
            <person name="Dunn M.J."/>
            <person name="Gemeiner M."/>
            <person name="Miller I."/>
        </authorList>
    </citation>
    <scope>NUCLEOTIDE SEQUENCE [MRNA] OF 27-40</scope>
    <source>
        <strain>Lewis</strain>
        <strain>Sprague-Dawley</strain>
        <strain>Wistar Kyoto</strain>
        <tissue>Urine</tissue>
    </source>
</reference>
<reference key="3">
    <citation type="journal article" date="2002" name="Proteomics">
        <title>The characterisation of novel secreted Ly-6 proteins from rat urine by the combined use of two-dimensional gel electrophoresis, microbore high performance liquid chromatography and expressed sequence tag data.</title>
        <authorList>
            <person name="Southan C."/>
            <person name="Cutler P."/>
            <person name="Birrell H."/>
            <person name="Connell J."/>
            <person name="Fantom K.G.M."/>
            <person name="Sims M."/>
            <person name="Shaikh N."/>
            <person name="Schneider K."/>
        </authorList>
    </citation>
    <scope>IDENTIFICATION</scope>
    <source>
        <tissue>Urine</tissue>
    </source>
</reference>
<comment type="subcellular location">
    <subcellularLocation>
        <location>Secreted</location>
    </subcellularLocation>
</comment>
<sequence length="101" mass="11100">MGKHILLLPLGLSLLMSSLLALQCFRCISFDSTGFCYVGRHICQTYPDEICAWVVVTTRDGKFVYGNQSCAECNATTVEHGSLIVSTNCCSATPFCNMVHR</sequence>